<sequence>MQKIQHVQPGLSTSEIAPATLAKTSLSQGNSTSASQKGAQSLIQQGLHDKNKPPELEQGNGSSVRSQDSRSTTLRELFSSEGASQSAPRAPRDSLASGGPIQSLPRFASAEAAEIKISGSTTSTPAAKSDITLDSHGKLQFGKGLPEALTTLLQQTIGKNSQPFVAHHENQDAQQHALADKSGRLFVIQSDDNQHIALHSSGRSAMPAGKLSSNNVQLESTPERIALKTTAGESTSMPLSGRMNHELLTGVHRQPTSASGAGEQLRLHDGKLFALNTEFGVWQQSSDVAHSQLSRQGDGQLYAVKDDHTLSNLSSGTASSTFSDKITAFSANQNGQSAVLTEQDHLTQLHLMSTLDATPQPVALKLENGDPVFAKAVNLTAEHLLIADNDGKLYHAPLPKAGEPHATLTPASTPELNAVLGDDHRITGFAHDEHGQTQALATDRQGQKHVAPLGQNGLSPTPGWNLSDSLVVDNKLGLTTAAPEAKDTLDLGRLGQIGLQEGKVHFYNGNTKNWEASSVEASQLKRGLDNQAYTLKDGEIKPLSINQKSDTFAHGDNTVFALPQVRMTPSAGTALPGIDKDDGVSAMAVINRNKFIAVDKQGDLHFHQIKPGTDKIAAPPLALPKNGLSGEIQDITLDHQQTLFALNKDGQLFQLPKTDWQNAANHDSAQWQPVKTPVEGKVSSLGTDAQHHLQIAHDDHELHTQQGNAWKTTVPKGEAPLPAEPRDAETVFGRLDVATKGMKIPLTGVTVKADFQVLGKTGEDSQQVKSKLSDLLRAHLVSFTLDMPRPIKTFADHVQHQLNGREGLKPVYDMQTELLKKLDATTSQPQGTVTDLATKIDKLDLGDKGKPLVNLLKQFHTELESSSAKAALLIGRQQGVVNDNGVMNTEGKPASLHSREKDLAPVLLAAMESHPSSKTSTAATLLKTFVDSKTPIAQKPNSEAFGQQRDTSDALSLAKTRLVLDTLALGDLHKLTDRIGALSGTSPGEAALASMMKELNAMRQGNYGENPVKKMTDMGFTNHKSLEADYDSVKTFMKAFRKEDNAVSVTSKTVMQAASQTDMIDKMKSTVLSLDSNESIAFNRTYGGGASMSFVVSGTPLPFPPVPGGGVSGERNYNLSFSRGENGINVAFERSGGITGKVSYSGGYDVSEYLTGKTSAQMTQDINSKHSFAPDVRASFGVSASLQVAQQNALNFTLSEEELPGFIDGLSSGTINPLALLDKGEQHSVKAGKTVSFNLDGNAALELRGGINLTEKGAAPTSATLRGSVGVTASANVLSATSSSSVAQGEKSTTYTESDNRLRFMNQAAMGANATLSAGAARTTPDGTVPFFTSASIGVNVAADSRTNQSISLGMKKAEPLEKKDIDALTKTLNSAFNDPASQLLIDGVKKMAEPDDQLAILNTHFADKTAKTDDQHQGLMSLKKLNVRQDVAQRDGATLDSVKHTTSYTNLSKLTENGLFQVIGNHLFSSLPPSNADRINQLIADNPALKDIVSRLQDNDRASVTVSLELKDDVREKIEKGIQNKTHGKDDVIALFKDGNNLRLASIEVSKAVKKSEGFNTPAVIINASSRAGVSMNKLLGNVSFSYGQDQTVPQSYKLSGEIAKANPATTNALQQLQQEGLQLNG</sequence>
<accession>D5GSK5</accession>
<protein>
    <recommendedName>
        <fullName evidence="6">Type III effector DspE</fullName>
    </recommendedName>
</protein>
<evidence type="ECO:0000250" key="1">
    <source>
        <dbReference type="UniProtKB" id="O54581"/>
    </source>
</evidence>
<evidence type="ECO:0000256" key="2">
    <source>
        <dbReference type="SAM" id="MobiDB-lite"/>
    </source>
</evidence>
<evidence type="ECO:0000269" key="3">
    <source>
    </source>
</evidence>
<evidence type="ECO:0000269" key="4">
    <source>
    </source>
</evidence>
<evidence type="ECO:0000303" key="5">
    <source ref="1"/>
</evidence>
<evidence type="ECO:0000305" key="6"/>
<evidence type="ECO:0000305" key="7">
    <source>
    </source>
</evidence>
<reference key="1">
    <citation type="submission" date="2009-11" db="EMBL/GenBank/DDBJ databases">
        <title>Characterisation of the type III secretion effector locus in Pectobacterium carotovorum strain 3-2.</title>
        <authorList>
            <person name="Nikolaichik Y."/>
            <person name="Valentovich L."/>
            <person name="Lagonenko A."/>
            <person name="Evtushenkov A."/>
        </authorList>
    </citation>
    <scope>NUCLEOTIDE SEQUENCE [GENOMIC DNA]</scope>
    <source>
        <strain>3-2</strain>
    </source>
</reference>
<reference key="2">
    <citation type="journal article" date="2011" name="Mol. Plant Microbe Interact.">
        <title>Pectobacterium carotovorum elicits plant cell death with DspE/F but the P. carotovorum DspE does not suppress callose or induce expression of plant genes early in plant-microbe interactions.</title>
        <authorList>
            <person name="Kim H.S."/>
            <person name="Thammarat P."/>
            <person name="Lommel S.A."/>
            <person name="Hogan C.S."/>
            <person name="Charkowski A.O."/>
        </authorList>
    </citation>
    <scope>FUNCTION</scope>
    <scope>DISRUPTION PHENOTYPE</scope>
    <source>
        <strain>WPP14</strain>
    </source>
</reference>
<reference key="3">
    <citation type="journal article" date="2013" name="PLoS ONE">
        <title>The type III secreted effector DspE is required early in solanum tuberosum leaf infection by Pectobacterium carotovorum to cause cell death, and requires Wx(3-6)D/E motifs.</title>
        <authorList>
            <person name="Hogan C.S."/>
            <person name="Mole B.M."/>
            <person name="Grant S.R."/>
            <person name="Willis D.K."/>
            <person name="Charkowski A.O."/>
        </authorList>
    </citation>
    <scope>FUNCTION</scope>
    <scope>INDUCTION</scope>
    <scope>DOMAIN</scope>
    <scope>MUTAGENESIS OF TRP-464; TRP-514 AND TRP-660</scope>
    <source>
        <strain>WPP14</strain>
    </source>
</reference>
<gene>
    <name evidence="5" type="primary">dspE</name>
</gene>
<keyword id="KW-0964">Secreted</keyword>
<keyword id="KW-0843">Virulence</keyword>
<dbReference type="EMBL" id="FN597645">
    <property type="protein sequence ID" value="CBI45053.1"/>
    <property type="molecule type" value="Genomic_DNA"/>
</dbReference>
<dbReference type="GO" id="GO:0005576">
    <property type="term" value="C:extracellular region"/>
    <property type="evidence" value="ECO:0007669"/>
    <property type="project" value="UniProtKB-SubCell"/>
</dbReference>
<dbReference type="GO" id="GO:0043657">
    <property type="term" value="C:host cell"/>
    <property type="evidence" value="ECO:0007669"/>
    <property type="project" value="UniProtKB-SubCell"/>
</dbReference>
<dbReference type="InterPro" id="IPR021085">
    <property type="entry name" value="AvrE_T3Es"/>
</dbReference>
<dbReference type="Pfam" id="PF11725">
    <property type="entry name" value="AvrE_T3Es"/>
    <property type="match status" value="1"/>
</dbReference>
<comment type="function">
    <text evidence="1">Major virulence factor that may function as a water- and solute-permeable channel dedicated to creating osmotic/water potential perturbation and a water- and nutrient-rich apoplast in which bacteria multiply within the infected plant tissues.</text>
</comment>
<comment type="function">
    <text evidence="3 4">Required for plant cell death in N.benthamiana leaves and leaf cell death in S.tuberosum (PubMed:21469936). Essential for pathogenicity (PubMed:23755246). Does not suppress callose formation (PubMed:21469936).</text>
</comment>
<comment type="subcellular location">
    <subcellularLocation>
        <location evidence="1">Secreted</location>
    </subcellularLocation>
    <subcellularLocation>
        <location evidence="1">Host cell</location>
    </subcellularLocation>
    <text evidence="1">Secreted via the Hrp type III secretion system (T3SS).</text>
</comment>
<comment type="induction">
    <text evidence="4">Transcription is positively regulated by the alternative sigma factor HrpL.</text>
</comment>
<comment type="domain">
    <text evidence="4">Wx(3-6)D/E motifs are required for pathogenicity.</text>
</comment>
<comment type="disruption phenotype">
    <text evidence="3">Mutant does not elicit plant cell death in either potato or N.benthamiana.</text>
</comment>
<comment type="similarity">
    <text evidence="6">Belongs to the AvrE family.</text>
</comment>
<name>DSPE_PECCA</name>
<proteinExistence type="evidence at protein level"/>
<organism>
    <name type="scientific">Pectobacterium carotovorum</name>
    <name type="common">Erwinia carotovora</name>
    <dbReference type="NCBI Taxonomy" id="554"/>
    <lineage>
        <taxon>Bacteria</taxon>
        <taxon>Pseudomonadati</taxon>
        <taxon>Pseudomonadota</taxon>
        <taxon>Gammaproteobacteria</taxon>
        <taxon>Enterobacterales</taxon>
        <taxon>Pectobacteriaceae</taxon>
        <taxon>Pectobacterium</taxon>
    </lineage>
</organism>
<feature type="chain" id="PRO_0000459498" description="Type III effector DspE">
    <location>
        <begin position="1"/>
        <end position="1627"/>
    </location>
</feature>
<feature type="region of interest" description="Disordered" evidence="2">
    <location>
        <begin position="22"/>
        <end position="102"/>
    </location>
</feature>
<feature type="region of interest" description="Disordered" evidence="2">
    <location>
        <begin position="436"/>
        <end position="464"/>
    </location>
</feature>
<feature type="short sequence motif" description="WxxxE 1" evidence="7">
    <location>
        <begin position="464"/>
        <end position="468"/>
    </location>
</feature>
<feature type="short sequence motif" description="WxxxE 2" evidence="7">
    <location>
        <begin position="514"/>
        <end position="520"/>
    </location>
</feature>
<feature type="short sequence motif" description="WxxxE 3" evidence="7">
    <location>
        <begin position="660"/>
        <end position="667"/>
    </location>
</feature>
<feature type="compositionally biased region" description="Polar residues" evidence="2">
    <location>
        <begin position="22"/>
        <end position="44"/>
    </location>
</feature>
<feature type="compositionally biased region" description="Polar residues" evidence="2">
    <location>
        <begin position="59"/>
        <end position="74"/>
    </location>
</feature>
<feature type="mutagenesis site" description="Retains cell-killing activity. Fails to induce necrosis; when associated with A-514 or A-660." evidence="4">
    <original>W</original>
    <variation>A</variation>
    <location>
        <position position="464"/>
    </location>
</feature>
<feature type="mutagenesis site" description="Retains cell-killing activity. Fails to induce necrosis; when associated with A-464 or A-660." evidence="4">
    <original>W</original>
    <variation>A</variation>
    <location>
        <position position="514"/>
    </location>
</feature>
<feature type="mutagenesis site" description="Retains cell-killing activity. Fails to induce necrosis; when associated with A-464 or A-514." evidence="4">
    <original>W</original>
    <variation>A</variation>
    <location>
        <position position="660"/>
    </location>
</feature>